<accession>P49704</accession>
<accession>D6VUM3</accession>
<accession>Q66R99</accession>
<reference key="1">
    <citation type="journal article" date="1996" name="Nucleic Acids Res.">
        <title>The PRP31 gene encodes a novel protein required for pre-mRNA splicing in Saccharomyces cerevisiae.</title>
        <authorList>
            <person name="Weidenhammer E.M."/>
            <person name="Singh M."/>
            <person name="Ruiz-Noriega M."/>
            <person name="Woolford J.L. Jr."/>
        </authorList>
    </citation>
    <scope>NUCLEOTIDE SEQUENCE [GENOMIC DNA]</scope>
    <scope>FUNCTION</scope>
</reference>
<reference key="2">
    <citation type="journal article" date="1997" name="Nature">
        <title>The nucleotide sequence of Saccharomyces cerevisiae chromosome VII.</title>
        <authorList>
            <person name="Tettelin H."/>
            <person name="Agostoni-Carbone M.L."/>
            <person name="Albermann K."/>
            <person name="Albers M."/>
            <person name="Arroyo J."/>
            <person name="Backes U."/>
            <person name="Barreiros T."/>
            <person name="Bertani I."/>
            <person name="Bjourson A.J."/>
            <person name="Brueckner M."/>
            <person name="Bruschi C.V."/>
            <person name="Carignani G."/>
            <person name="Castagnoli L."/>
            <person name="Cerdan E."/>
            <person name="Clemente M.L."/>
            <person name="Coblenz A."/>
            <person name="Coglievina M."/>
            <person name="Coissac E."/>
            <person name="Defoor E."/>
            <person name="Del Bino S."/>
            <person name="Delius H."/>
            <person name="Delneri D."/>
            <person name="de Wergifosse P."/>
            <person name="Dujon B."/>
            <person name="Durand P."/>
            <person name="Entian K.-D."/>
            <person name="Eraso P."/>
            <person name="Escribano V."/>
            <person name="Fabiani L."/>
            <person name="Fartmann B."/>
            <person name="Feroli F."/>
            <person name="Feuermann M."/>
            <person name="Frontali L."/>
            <person name="Garcia-Gonzalez M."/>
            <person name="Garcia-Saez M.I."/>
            <person name="Goffeau A."/>
            <person name="Guerreiro P."/>
            <person name="Hani J."/>
            <person name="Hansen M."/>
            <person name="Hebling U."/>
            <person name="Hernandez K."/>
            <person name="Heumann K."/>
            <person name="Hilger F."/>
            <person name="Hofmann B."/>
            <person name="Indge K.J."/>
            <person name="James C.M."/>
            <person name="Klima R."/>
            <person name="Koetter P."/>
            <person name="Kramer B."/>
            <person name="Kramer W."/>
            <person name="Lauquin G."/>
            <person name="Leuther H."/>
            <person name="Louis E.J."/>
            <person name="Maillier E."/>
            <person name="Marconi A."/>
            <person name="Martegani E."/>
            <person name="Mazon M.J."/>
            <person name="Mazzoni C."/>
            <person name="McReynolds A.D.K."/>
            <person name="Melchioretto P."/>
            <person name="Mewes H.-W."/>
            <person name="Minenkova O."/>
            <person name="Mueller-Auer S."/>
            <person name="Nawrocki A."/>
            <person name="Netter P."/>
            <person name="Neu R."/>
            <person name="Nombela C."/>
            <person name="Oliver S.G."/>
            <person name="Panzeri L."/>
            <person name="Paoluzi S."/>
            <person name="Plevani P."/>
            <person name="Portetelle D."/>
            <person name="Portillo F."/>
            <person name="Potier S."/>
            <person name="Purnelle B."/>
            <person name="Rieger M."/>
            <person name="Riles L."/>
            <person name="Rinaldi T."/>
            <person name="Robben J."/>
            <person name="Rodrigues-Pousada C."/>
            <person name="Rodriguez-Belmonte E."/>
            <person name="Rodriguez-Torres A.M."/>
            <person name="Rose M."/>
            <person name="Ruzzi M."/>
            <person name="Saliola M."/>
            <person name="Sanchez-Perez M."/>
            <person name="Schaefer B."/>
            <person name="Schaefer M."/>
            <person name="Scharfe M."/>
            <person name="Schmidheini T."/>
            <person name="Schreer A."/>
            <person name="Skala J."/>
            <person name="Souciet J.-L."/>
            <person name="Steensma H.Y."/>
            <person name="Talla E."/>
            <person name="Thierry A."/>
            <person name="Vandenbol M."/>
            <person name="van der Aart Q.J.M."/>
            <person name="Van Dyck L."/>
            <person name="Vanoni M."/>
            <person name="Verhasselt P."/>
            <person name="Voet M."/>
            <person name="Volckaert G."/>
            <person name="Wambutt R."/>
            <person name="Watson M.D."/>
            <person name="Weber N."/>
            <person name="Wedler E."/>
            <person name="Wedler H."/>
            <person name="Wipfli P."/>
            <person name="Wolf K."/>
            <person name="Wright L.F."/>
            <person name="Zaccaria P."/>
            <person name="Zimmermann M."/>
            <person name="Zollner A."/>
            <person name="Kleine K."/>
        </authorList>
    </citation>
    <scope>NUCLEOTIDE SEQUENCE [LARGE SCALE GENOMIC DNA]</scope>
    <source>
        <strain>ATCC 204508 / S288c</strain>
    </source>
</reference>
<reference key="3">
    <citation type="journal article" date="2014" name="G3 (Bethesda)">
        <title>The reference genome sequence of Saccharomyces cerevisiae: Then and now.</title>
        <authorList>
            <person name="Engel S.R."/>
            <person name="Dietrich F.S."/>
            <person name="Fisk D.G."/>
            <person name="Binkley G."/>
            <person name="Balakrishnan R."/>
            <person name="Costanzo M.C."/>
            <person name="Dwight S.S."/>
            <person name="Hitz B.C."/>
            <person name="Karra K."/>
            <person name="Nash R.S."/>
            <person name="Weng S."/>
            <person name="Wong E.D."/>
            <person name="Lloyd P."/>
            <person name="Skrzypek M.S."/>
            <person name="Miyasato S.R."/>
            <person name="Simison M."/>
            <person name="Cherry J.M."/>
        </authorList>
    </citation>
    <scope>GENOME REANNOTATION</scope>
    <source>
        <strain>ATCC 204508 / S288c</strain>
    </source>
</reference>
<reference key="4">
    <citation type="journal article" date="2007" name="Genome Res.">
        <title>Approaching a complete repository of sequence-verified protein-encoding clones for Saccharomyces cerevisiae.</title>
        <authorList>
            <person name="Hu Y."/>
            <person name="Rolfs A."/>
            <person name="Bhullar B."/>
            <person name="Murthy T.V.S."/>
            <person name="Zhu C."/>
            <person name="Berger M.F."/>
            <person name="Camargo A.A."/>
            <person name="Kelley F."/>
            <person name="McCarron S."/>
            <person name="Jepson D."/>
            <person name="Richardson A."/>
            <person name="Raphael J."/>
            <person name="Moreira D."/>
            <person name="Taycher E."/>
            <person name="Zuo D."/>
            <person name="Mohr S."/>
            <person name="Kane M.F."/>
            <person name="Williamson J."/>
            <person name="Simpson A.J.G."/>
            <person name="Bulyk M.L."/>
            <person name="Harlow E."/>
            <person name="Marsischky G."/>
            <person name="Kolodner R.D."/>
            <person name="LaBaer J."/>
        </authorList>
    </citation>
    <scope>NUCLEOTIDE SEQUENCE [GENOMIC DNA]</scope>
    <source>
        <strain>ATCC 204508 / S288c</strain>
    </source>
</reference>
<reference key="5">
    <citation type="journal article" date="1997" name="Mol. Cell. Biol.">
        <title>Prp31p promotes the association of the U4/U6.U5 tri-snRNP with prespliceosomes to form spliceosomes in Saccharomyces cerevisiae.</title>
        <authorList>
            <person name="Weidenhammer E.M."/>
            <person name="Ruiz-Noriega M."/>
            <person name="Woolford J.L. Jr."/>
        </authorList>
    </citation>
    <scope>IDENTIFICATION IN U4/U6.U5 TRI-SNRNP COMPLEX</scope>
</reference>
<reference key="6">
    <citation type="journal article" date="1999" name="EMBO J.">
        <title>Identification by mass spectrometry and functional analysis of novel proteins of the yeast [U4/U6.U5] tri-snRNP.</title>
        <authorList>
            <person name="Gottschalk A."/>
            <person name="Neubauer G."/>
            <person name="Banroques J."/>
            <person name="Mann M."/>
            <person name="Luehrmann R."/>
            <person name="Fabrizio P."/>
        </authorList>
    </citation>
    <scope>SUBUNIT</scope>
    <scope>IDENTIFICATION IN THE U4/U5/U6 TRI-SNRNP COMPLEX</scope>
    <scope>IDENTIFICATION BY MASS SPECTROMETRY</scope>
</reference>
<reference key="7">
    <citation type="journal article" date="1999" name="Proc. Natl. Acad. Sci. U.S.A.">
        <title>Purification of the yeast U4/U6.U5 small nuclear ribonucleoprotein particle and identification of its proteins.</title>
        <authorList>
            <person name="Stevens S.W."/>
            <person name="Abelson J."/>
        </authorList>
    </citation>
    <scope>IDENTIFICATION IN U4/U6.U5 TRI-SNRNP COMPLEX</scope>
    <scope>IDENTIFICATION BY MASS SPECTROMETRY</scope>
</reference>
<reference key="8">
    <citation type="journal article" date="2002" name="Mol. Cell">
        <title>Composition and functional characterization of the yeast spliceosomal penta-snRNP.</title>
        <authorList>
            <person name="Stevens S.W."/>
            <person name="Ryan D.E."/>
            <person name="Ge H.Y."/>
            <person name="Moore R.E."/>
            <person name="Young M.K."/>
            <person name="Lee T.D."/>
            <person name="Abelson J."/>
        </authorList>
    </citation>
    <scope>IDENTIFICATION IN U1.U2.U4/U6.U5 PENTA-SNRNP COMPLEX</scope>
    <scope>IDENTIFICATION BY MASS SPECTROMETRY</scope>
</reference>
<reference key="9">
    <citation type="journal article" date="2003" name="Nature">
        <title>Global analysis of protein expression in yeast.</title>
        <authorList>
            <person name="Ghaemmaghami S."/>
            <person name="Huh W.-K."/>
            <person name="Bower K."/>
            <person name="Howson R.W."/>
            <person name="Belle A."/>
            <person name="Dephoure N."/>
            <person name="O'Shea E.K."/>
            <person name="Weissman J.S."/>
        </authorList>
    </citation>
    <scope>LEVEL OF PROTEIN EXPRESSION [LARGE SCALE ANALYSIS]</scope>
</reference>
<reference key="10">
    <citation type="journal article" date="2008" name="Nat. Struct. Mol. Biol.">
        <title>Localization of Prp8, Brr2, Snu114 and U4/U6 proteins in the yeast tri-snRNP by electron microscopy.</title>
        <authorList>
            <person name="Hacker I."/>
            <person name="Sander B."/>
            <person name="Golas M.M."/>
            <person name="Wolf E."/>
            <person name="Karagoz E."/>
            <person name="Kastner B."/>
            <person name="Stark H."/>
            <person name="Fabrizio P."/>
            <person name="Luhrmann R."/>
        </authorList>
    </citation>
    <scope>SUBUNIT</scope>
    <scope>IDENTIFICATION IN THE U4/U5/U6 TRI-SNRNP COMPLEX</scope>
    <scope>ELECTRON MICROSCOPY</scope>
</reference>
<sequence>MSSEEDYFDELEYDLADEVNEEKEDIQTKKLTTVNCQTEKFNPFEILPESIELFRTLALISPDRLSLSETAQILPKIVDLKRILQQQEIDFIKLLPFFNEIIPLIKSNIKLMHNFLISLYSRRFPELSSLIPSPLQYSKVISILENENYSKNESDELFFHLENKAKLTREQILVLTMSMKTSFKNKEPLDIKTRTQILEANSILENLWKLQEDIGQYIASKISIIAPNVCFLVGPEIAAQLIAHAGGVLEFSRIPSCNIASIGKNKHLSHELHTLESGVRQEGYLFASDMIQKFPVSVHKQMLRMLCAKVSLAARVDAGQKNGDRNTVLAHKWKAELSKKARKLSEAPSISETKALPIPEDQPKKKRAGRKFRKYKEKFRLSHVRQLQNRMEFGKQEQTVLDSYGEEVGLGMSNTSLQQAVGATSGSRRSAGNQAKLTKVMKHRISEANQQADEFLISLGHNTEQPNLSPEMVQMHKKQHTNPEEETNWFSGHG</sequence>
<feature type="chain" id="PRO_0000058589" description="Pre-mRNA-processing factor 31">
    <location>
        <begin position="1"/>
        <end position="494"/>
    </location>
</feature>
<feature type="domain" description="Nop" evidence="2">
    <location>
        <begin position="225"/>
        <end position="346"/>
    </location>
</feature>
<feature type="region of interest" description="Disordered" evidence="3">
    <location>
        <begin position="344"/>
        <end position="370"/>
    </location>
</feature>
<feature type="coiled-coil region" evidence="1">
    <location>
        <begin position="88"/>
        <end position="122"/>
    </location>
</feature>
<feature type="coiled-coil region" evidence="1">
    <location>
        <begin position="191"/>
        <end position="225"/>
    </location>
</feature>
<feature type="site" description="Interaction with U4 snRNA" evidence="1">
    <location>
        <position position="257"/>
    </location>
</feature>
<feature type="sequence conflict" description="In Ref. 2; AAU09731." evidence="11" ref="2">
    <original>L</original>
    <variation>F</variation>
    <location>
        <position position="31"/>
    </location>
</feature>
<evidence type="ECO:0000250" key="1"/>
<evidence type="ECO:0000255" key="2">
    <source>
        <dbReference type="PROSITE-ProRule" id="PRU00690"/>
    </source>
</evidence>
<evidence type="ECO:0000256" key="3">
    <source>
        <dbReference type="SAM" id="MobiDB-lite"/>
    </source>
</evidence>
<evidence type="ECO:0000269" key="4">
    <source>
    </source>
</evidence>
<evidence type="ECO:0000269" key="5">
    <source>
    </source>
</evidence>
<evidence type="ECO:0000269" key="6">
    <source>
    </source>
</evidence>
<evidence type="ECO:0000269" key="7">
    <source>
    </source>
</evidence>
<evidence type="ECO:0000269" key="8">
    <source>
    </source>
</evidence>
<evidence type="ECO:0000269" key="9">
    <source>
    </source>
</evidence>
<evidence type="ECO:0000269" key="10">
    <source>
    </source>
</evidence>
<evidence type="ECO:0000305" key="11"/>
<name>PRP31_YEAST</name>
<protein>
    <recommendedName>
        <fullName>Pre-mRNA-processing factor 31</fullName>
    </recommendedName>
</protein>
<keyword id="KW-0002">3D-structure</keyword>
<keyword id="KW-0175">Coiled coil</keyword>
<keyword id="KW-0507">mRNA processing</keyword>
<keyword id="KW-0508">mRNA splicing</keyword>
<keyword id="KW-0539">Nucleus</keyword>
<keyword id="KW-1185">Reference proteome</keyword>
<keyword id="KW-0687">Ribonucleoprotein</keyword>
<keyword id="KW-0694">RNA-binding</keyword>
<keyword id="KW-0747">Spliceosome</keyword>
<dbReference type="EMBL" id="U31970">
    <property type="protein sequence ID" value="AAA74984.1"/>
    <property type="status" value="ALT_FRAME"/>
    <property type="molecule type" value="Genomic_DNA"/>
</dbReference>
<dbReference type="EMBL" id="Z72876">
    <property type="protein sequence ID" value="CAA97094.1"/>
    <property type="molecule type" value="Genomic_DNA"/>
</dbReference>
<dbReference type="EMBL" id="AY723814">
    <property type="protein sequence ID" value="AAU09731.1"/>
    <property type="molecule type" value="Genomic_DNA"/>
</dbReference>
<dbReference type="EMBL" id="BK006941">
    <property type="protein sequence ID" value="DAA08184.1"/>
    <property type="molecule type" value="Genomic_DNA"/>
</dbReference>
<dbReference type="PIR" id="S64386">
    <property type="entry name" value="S64386"/>
</dbReference>
<dbReference type="RefSeq" id="NP_011605.1">
    <property type="nucleotide sequence ID" value="NM_001181220.1"/>
</dbReference>
<dbReference type="PDB" id="3JCM">
    <property type="method" value="EM"/>
    <property type="resolution" value="3.80 A"/>
    <property type="chains" value="I=1-494"/>
</dbReference>
<dbReference type="PDB" id="5GAN">
    <property type="method" value="EM"/>
    <property type="resolution" value="3.60 A"/>
    <property type="chains" value="F=1-494"/>
</dbReference>
<dbReference type="PDB" id="5GAP">
    <property type="method" value="EM"/>
    <property type="resolution" value="3.60 A"/>
    <property type="chains" value="F=1-494"/>
</dbReference>
<dbReference type="PDB" id="5NRL">
    <property type="method" value="EM"/>
    <property type="resolution" value="7.20 A"/>
    <property type="chains" value="F=1-494"/>
</dbReference>
<dbReference type="PDB" id="5ZWM">
    <property type="method" value="EM"/>
    <property type="resolution" value="3.40 A"/>
    <property type="chains" value="L=1-494"/>
</dbReference>
<dbReference type="PDB" id="5ZWO">
    <property type="method" value="EM"/>
    <property type="resolution" value="3.90 A"/>
    <property type="chains" value="L=1-494"/>
</dbReference>
<dbReference type="PDBsum" id="3JCM"/>
<dbReference type="PDBsum" id="5GAN"/>
<dbReference type="PDBsum" id="5GAP"/>
<dbReference type="PDBsum" id="5NRL"/>
<dbReference type="PDBsum" id="5ZWM"/>
<dbReference type="PDBsum" id="5ZWO"/>
<dbReference type="EMDB" id="EMD-3683"/>
<dbReference type="EMDB" id="EMD-6972"/>
<dbReference type="EMDB" id="EMD-6974"/>
<dbReference type="EMDB" id="EMD-8012"/>
<dbReference type="EMDB" id="EMD-8014"/>
<dbReference type="SMR" id="P49704"/>
<dbReference type="BioGRID" id="33334">
    <property type="interactions" value="238"/>
</dbReference>
<dbReference type="ComplexPortal" id="CPX-25">
    <property type="entry name" value="U4/U6.U5 tri-small nuclear ribonucleoprotein complex"/>
</dbReference>
<dbReference type="ComplexPortal" id="CPX-32">
    <property type="entry name" value="U4/U6 small nuclear ribonucleoprotein complex"/>
</dbReference>
<dbReference type="DIP" id="DIP-5355N"/>
<dbReference type="FunCoup" id="P49704">
    <property type="interactions" value="1397"/>
</dbReference>
<dbReference type="IntAct" id="P49704">
    <property type="interactions" value="40"/>
</dbReference>
<dbReference type="MINT" id="P49704"/>
<dbReference type="STRING" id="4932.YGR091W"/>
<dbReference type="iPTMnet" id="P49704"/>
<dbReference type="PaxDb" id="4932-YGR091W"/>
<dbReference type="PeptideAtlas" id="P49704"/>
<dbReference type="EnsemblFungi" id="YGR091W_mRNA">
    <property type="protein sequence ID" value="YGR091W"/>
    <property type="gene ID" value="YGR091W"/>
</dbReference>
<dbReference type="GeneID" id="852983"/>
<dbReference type="KEGG" id="sce:YGR091W"/>
<dbReference type="AGR" id="SGD:S000003323"/>
<dbReference type="SGD" id="S000003323">
    <property type="gene designation" value="PRP31"/>
</dbReference>
<dbReference type="VEuPathDB" id="FungiDB:YGR091W"/>
<dbReference type="eggNOG" id="KOG2574">
    <property type="taxonomic scope" value="Eukaryota"/>
</dbReference>
<dbReference type="GeneTree" id="ENSGT00550000075069"/>
<dbReference type="HOGENOM" id="CLU_026337_3_0_1"/>
<dbReference type="InParanoid" id="P49704"/>
<dbReference type="OMA" id="IGNGPMD"/>
<dbReference type="OrthoDB" id="4771285at2759"/>
<dbReference type="BioCyc" id="YEAST:G3O-30801-MONOMER"/>
<dbReference type="BioGRID-ORCS" id="852983">
    <property type="hits" value="0 hits in 10 CRISPR screens"/>
</dbReference>
<dbReference type="EvolutionaryTrace" id="P49704"/>
<dbReference type="PRO" id="PR:P49704"/>
<dbReference type="Proteomes" id="UP000002311">
    <property type="component" value="Chromosome VII"/>
</dbReference>
<dbReference type="RNAct" id="P49704">
    <property type="molecule type" value="protein"/>
</dbReference>
<dbReference type="GO" id="GO:0005739">
    <property type="term" value="C:mitochondrion"/>
    <property type="evidence" value="ECO:0007005"/>
    <property type="project" value="SGD"/>
</dbReference>
<dbReference type="GO" id="GO:0005634">
    <property type="term" value="C:nucleus"/>
    <property type="evidence" value="ECO:0000303"/>
    <property type="project" value="ComplexPortal"/>
</dbReference>
<dbReference type="GO" id="GO:0071011">
    <property type="term" value="C:precatalytic spliceosome"/>
    <property type="evidence" value="ECO:0000318"/>
    <property type="project" value="GO_Central"/>
</dbReference>
<dbReference type="GO" id="GO:0005681">
    <property type="term" value="C:spliceosomal complex"/>
    <property type="evidence" value="ECO:0000303"/>
    <property type="project" value="ComplexPortal"/>
</dbReference>
<dbReference type="GO" id="GO:0097526">
    <property type="term" value="C:spliceosomal tri-snRNP complex"/>
    <property type="evidence" value="ECO:0000318"/>
    <property type="project" value="GO_Central"/>
</dbReference>
<dbReference type="GO" id="GO:0005687">
    <property type="term" value="C:U4 snRNP"/>
    <property type="evidence" value="ECO:0000318"/>
    <property type="project" value="GO_Central"/>
</dbReference>
<dbReference type="GO" id="GO:0071001">
    <property type="term" value="C:U4/U6 snRNP"/>
    <property type="evidence" value="ECO:0000303"/>
    <property type="project" value="ComplexPortal"/>
</dbReference>
<dbReference type="GO" id="GO:0046540">
    <property type="term" value="C:U4/U6 x U5 tri-snRNP complex"/>
    <property type="evidence" value="ECO:0000314"/>
    <property type="project" value="SGD"/>
</dbReference>
<dbReference type="GO" id="GO:0003723">
    <property type="term" value="F:RNA binding"/>
    <property type="evidence" value="ECO:0007669"/>
    <property type="project" value="UniProtKB-KW"/>
</dbReference>
<dbReference type="GO" id="GO:0000398">
    <property type="term" value="P:mRNA splicing, via spliceosome"/>
    <property type="evidence" value="ECO:0000318"/>
    <property type="project" value="GO_Central"/>
</dbReference>
<dbReference type="GO" id="GO:0000387">
    <property type="term" value="P:spliceosomal snRNP assembly"/>
    <property type="evidence" value="ECO:0000314"/>
    <property type="project" value="SGD"/>
</dbReference>
<dbReference type="GO" id="GO:0000244">
    <property type="term" value="P:spliceosomal tri-snRNP complex assembly"/>
    <property type="evidence" value="ECO:0007669"/>
    <property type="project" value="InterPro"/>
</dbReference>
<dbReference type="Gene3D" id="1.10.287.4070">
    <property type="match status" value="1"/>
</dbReference>
<dbReference type="Gene3D" id="1.10.246.90">
    <property type="entry name" value="Nop domain"/>
    <property type="match status" value="1"/>
</dbReference>
<dbReference type="InterPro" id="IPR042239">
    <property type="entry name" value="Nop_C"/>
</dbReference>
<dbReference type="InterPro" id="IPR002687">
    <property type="entry name" value="Nop_dom"/>
</dbReference>
<dbReference type="InterPro" id="IPR036070">
    <property type="entry name" value="Nop_dom_sf"/>
</dbReference>
<dbReference type="InterPro" id="IPR012976">
    <property type="entry name" value="NOSIC"/>
</dbReference>
<dbReference type="InterPro" id="IPR027105">
    <property type="entry name" value="Prp31"/>
</dbReference>
<dbReference type="InterPro" id="IPR019175">
    <property type="entry name" value="Prp31_C"/>
</dbReference>
<dbReference type="PANTHER" id="PTHR13904">
    <property type="entry name" value="PRE-MRNA SPLICING FACTOR PRP31"/>
    <property type="match status" value="1"/>
</dbReference>
<dbReference type="PANTHER" id="PTHR13904:SF0">
    <property type="entry name" value="U4_U6 SMALL NUCLEAR RIBONUCLEOPROTEIN PRP31"/>
    <property type="match status" value="1"/>
</dbReference>
<dbReference type="Pfam" id="PF01798">
    <property type="entry name" value="Nop"/>
    <property type="match status" value="1"/>
</dbReference>
<dbReference type="Pfam" id="PF09785">
    <property type="entry name" value="Prp31_C"/>
    <property type="match status" value="1"/>
</dbReference>
<dbReference type="SMART" id="SM00931">
    <property type="entry name" value="NOSIC"/>
    <property type="match status" value="1"/>
</dbReference>
<dbReference type="SUPFAM" id="SSF89124">
    <property type="entry name" value="Nop domain"/>
    <property type="match status" value="1"/>
</dbReference>
<dbReference type="PROSITE" id="PS51358">
    <property type="entry name" value="NOP"/>
    <property type="match status" value="1"/>
</dbReference>
<organism>
    <name type="scientific">Saccharomyces cerevisiae (strain ATCC 204508 / S288c)</name>
    <name type="common">Baker's yeast</name>
    <dbReference type="NCBI Taxonomy" id="559292"/>
    <lineage>
        <taxon>Eukaryota</taxon>
        <taxon>Fungi</taxon>
        <taxon>Dikarya</taxon>
        <taxon>Ascomycota</taxon>
        <taxon>Saccharomycotina</taxon>
        <taxon>Saccharomycetes</taxon>
        <taxon>Saccharomycetales</taxon>
        <taxon>Saccharomycetaceae</taxon>
        <taxon>Saccharomyces</taxon>
    </lineage>
</organism>
<gene>
    <name type="primary">PRP31</name>
    <name type="ordered locus">YGR091W</name>
</gene>
<proteinExistence type="evidence at protein level"/>
<comment type="function">
    <text evidence="9">Promotes the association of the U4/U6.U5 tri-snRNP particle with pre-spliceosomes to form the mature spliceosomal complex.</text>
</comment>
<comment type="subunit">
    <text evidence="4 5 6 8 10">Component of the U4/U6-U5 tri-snRNP complex composed of the U4, U6 and U5 snRNAs and at least PRP3, PRP4, PRP6, PRP8, PRP18, PRP31, PRP38, SNU13, SNU23, SNU66, SNU114, SPP381, SMB1, SMD1, SMD2, SMD3, SMX2, SMX3, LSM2, LSM3, LSM4, LSM5, LSM6, LSM7, LSM8, BRR2 and DIB1.</text>
</comment>
<comment type="subcellular location">
    <subcellularLocation>
        <location>Nucleus</location>
    </subcellularLocation>
</comment>
<comment type="domain">
    <text evidence="1">Interacts with the snRNP via the Nop domain.</text>
</comment>
<comment type="domain">
    <text evidence="1">The coiled coil domain is formed by two non-contiguous helices.</text>
</comment>
<comment type="miscellaneous">
    <text evidence="7">Present with 1260 molecules/cell in log phase SD medium.</text>
</comment>
<comment type="similarity">
    <text evidence="11">Belongs to the PRP31 family.</text>
</comment>
<comment type="sequence caution" evidence="11">
    <conflict type="frameshift">
        <sequence resource="EMBL-CDS" id="AAA74984"/>
    </conflict>
</comment>